<dbReference type="EMBL" id="AY859727">
    <property type="protein sequence ID" value="AAW50955.1"/>
    <property type="molecule type" value="mRNA"/>
</dbReference>
<dbReference type="RefSeq" id="NP_001011555.1">
    <property type="nucleotide sequence ID" value="NM_001011555.1"/>
</dbReference>
<dbReference type="SMR" id="Q5I2M4"/>
<dbReference type="STRING" id="9940.ENSOARP00000006599"/>
<dbReference type="GlyCosmos" id="Q5I2M4">
    <property type="glycosylation" value="14 sites, No reported glycans"/>
</dbReference>
<dbReference type="PaxDb" id="9940-ENSOARP00000006599"/>
<dbReference type="Ensembl" id="ENSOART00185058290">
    <property type="protein sequence ID" value="ENSOARP00185029553"/>
    <property type="gene ID" value="ENSOARG00185034927"/>
</dbReference>
<dbReference type="Ensembl" id="ENSOART00215008636">
    <property type="protein sequence ID" value="ENSOARP00215004721"/>
    <property type="gene ID" value="ENSOARG00215005088"/>
</dbReference>
<dbReference type="Ensembl" id="ENSOART00225066592">
    <property type="protein sequence ID" value="ENSOARP00225033567"/>
    <property type="gene ID" value="ENSOARG00225040200"/>
</dbReference>
<dbReference type="GeneID" id="494547"/>
<dbReference type="KEGG" id="oas:494547"/>
<dbReference type="CTD" id="54106"/>
<dbReference type="eggNOG" id="KOG4641">
    <property type="taxonomic scope" value="Eukaryota"/>
</dbReference>
<dbReference type="OrthoDB" id="10006997at2759"/>
<dbReference type="Proteomes" id="UP000002356">
    <property type="component" value="Unplaced"/>
</dbReference>
<dbReference type="GO" id="GO:0032009">
    <property type="term" value="C:early phagosome"/>
    <property type="evidence" value="ECO:0000250"/>
    <property type="project" value="UniProtKB"/>
</dbReference>
<dbReference type="GO" id="GO:0036019">
    <property type="term" value="C:endolysosome"/>
    <property type="evidence" value="ECO:0000250"/>
    <property type="project" value="UniProtKB"/>
</dbReference>
<dbReference type="GO" id="GO:0005783">
    <property type="term" value="C:endoplasmic reticulum"/>
    <property type="evidence" value="ECO:0000250"/>
    <property type="project" value="UniProtKB"/>
</dbReference>
<dbReference type="GO" id="GO:0005789">
    <property type="term" value="C:endoplasmic reticulum membrane"/>
    <property type="evidence" value="ECO:0007669"/>
    <property type="project" value="UniProtKB-SubCell"/>
</dbReference>
<dbReference type="GO" id="GO:0005768">
    <property type="term" value="C:endosome"/>
    <property type="evidence" value="ECO:0000250"/>
    <property type="project" value="UniProtKB"/>
</dbReference>
<dbReference type="GO" id="GO:0005764">
    <property type="term" value="C:lysosome"/>
    <property type="evidence" value="ECO:0000250"/>
    <property type="project" value="UniProtKB"/>
</dbReference>
<dbReference type="GO" id="GO:0005886">
    <property type="term" value="C:plasma membrane"/>
    <property type="evidence" value="ECO:0007669"/>
    <property type="project" value="TreeGrafter"/>
</dbReference>
<dbReference type="GO" id="GO:0038187">
    <property type="term" value="F:pattern recognition receptor activity"/>
    <property type="evidence" value="ECO:0000250"/>
    <property type="project" value="UniProtKB"/>
</dbReference>
<dbReference type="GO" id="GO:0042803">
    <property type="term" value="F:protein homodimerization activity"/>
    <property type="evidence" value="ECO:0000250"/>
    <property type="project" value="UniProtKB"/>
</dbReference>
<dbReference type="GO" id="GO:0035197">
    <property type="term" value="F:siRNA binding"/>
    <property type="evidence" value="ECO:0000250"/>
    <property type="project" value="UniProtKB"/>
</dbReference>
<dbReference type="GO" id="GO:0045322">
    <property type="term" value="F:unmethylated CpG binding"/>
    <property type="evidence" value="ECO:0000250"/>
    <property type="project" value="UniProtKB"/>
</dbReference>
<dbReference type="GO" id="GO:0007249">
    <property type="term" value="P:canonical NF-kappaB signal transduction"/>
    <property type="evidence" value="ECO:0007669"/>
    <property type="project" value="TreeGrafter"/>
</dbReference>
<dbReference type="GO" id="GO:0051607">
    <property type="term" value="P:defense response to virus"/>
    <property type="evidence" value="ECO:0007669"/>
    <property type="project" value="TreeGrafter"/>
</dbReference>
<dbReference type="GO" id="GO:0006954">
    <property type="term" value="P:inflammatory response"/>
    <property type="evidence" value="ECO:0007669"/>
    <property type="project" value="UniProtKB-KW"/>
</dbReference>
<dbReference type="GO" id="GO:0045087">
    <property type="term" value="P:innate immune response"/>
    <property type="evidence" value="ECO:0007669"/>
    <property type="project" value="UniProtKB-KW"/>
</dbReference>
<dbReference type="GO" id="GO:0050871">
    <property type="term" value="P:positive regulation of B cell activation"/>
    <property type="evidence" value="ECO:0000250"/>
    <property type="project" value="UniProtKB"/>
</dbReference>
<dbReference type="GO" id="GO:0030890">
    <property type="term" value="P:positive regulation of B cell proliferation"/>
    <property type="evidence" value="ECO:0000250"/>
    <property type="project" value="UniProtKB"/>
</dbReference>
<dbReference type="GO" id="GO:0002639">
    <property type="term" value="P:positive regulation of immunoglobulin production"/>
    <property type="evidence" value="ECO:0000250"/>
    <property type="project" value="UniProtKB"/>
</dbReference>
<dbReference type="GO" id="GO:0032727">
    <property type="term" value="P:positive regulation of interferon-alpha production"/>
    <property type="evidence" value="ECO:0000250"/>
    <property type="project" value="UniProtKB"/>
</dbReference>
<dbReference type="GO" id="GO:0032728">
    <property type="term" value="P:positive regulation of interferon-beta production"/>
    <property type="evidence" value="ECO:0000250"/>
    <property type="project" value="UniProtKB"/>
</dbReference>
<dbReference type="GO" id="GO:0032755">
    <property type="term" value="P:positive regulation of interleukin-6 production"/>
    <property type="evidence" value="ECO:0007669"/>
    <property type="project" value="TreeGrafter"/>
</dbReference>
<dbReference type="GO" id="GO:0043410">
    <property type="term" value="P:positive regulation of MAPK cascade"/>
    <property type="evidence" value="ECO:0000250"/>
    <property type="project" value="UniProtKB"/>
</dbReference>
<dbReference type="GO" id="GO:0034165">
    <property type="term" value="P:positive regulation of toll-like receptor 9 signaling pathway"/>
    <property type="evidence" value="ECO:0000250"/>
    <property type="project" value="UniProtKB"/>
</dbReference>
<dbReference type="GO" id="GO:0032729">
    <property type="term" value="P:positive regulation of type II interferon production"/>
    <property type="evidence" value="ECO:0000250"/>
    <property type="project" value="UniProtKB"/>
</dbReference>
<dbReference type="GO" id="GO:0045577">
    <property type="term" value="P:regulation of B cell differentiation"/>
    <property type="evidence" value="ECO:0000250"/>
    <property type="project" value="UniProtKB"/>
</dbReference>
<dbReference type="GO" id="GO:0002224">
    <property type="term" value="P:toll-like receptor signaling pathway"/>
    <property type="evidence" value="ECO:0007669"/>
    <property type="project" value="TreeGrafter"/>
</dbReference>
<dbReference type="FunFam" id="3.40.50.10140:FF:000003">
    <property type="entry name" value="Toll-like receptor 7"/>
    <property type="match status" value="1"/>
</dbReference>
<dbReference type="FunFam" id="3.80.10.10:FF:000037">
    <property type="entry name" value="Toll-like receptor 7"/>
    <property type="match status" value="1"/>
</dbReference>
<dbReference type="Gene3D" id="3.80.10.10">
    <property type="entry name" value="Ribonuclease Inhibitor"/>
    <property type="match status" value="1"/>
</dbReference>
<dbReference type="Gene3D" id="3.40.50.10140">
    <property type="entry name" value="Toll/interleukin-1 receptor homology (TIR) domain"/>
    <property type="match status" value="1"/>
</dbReference>
<dbReference type="InterPro" id="IPR001611">
    <property type="entry name" value="Leu-rich_rpt"/>
</dbReference>
<dbReference type="InterPro" id="IPR003591">
    <property type="entry name" value="Leu-rich_rpt_typical-subtyp"/>
</dbReference>
<dbReference type="InterPro" id="IPR041283">
    <property type="entry name" value="LRR_12"/>
</dbReference>
<dbReference type="InterPro" id="IPR032675">
    <property type="entry name" value="LRR_dom_sf"/>
</dbReference>
<dbReference type="InterPro" id="IPR000157">
    <property type="entry name" value="TIR_dom"/>
</dbReference>
<dbReference type="InterPro" id="IPR035897">
    <property type="entry name" value="Toll_tir_struct_dom_sf"/>
</dbReference>
<dbReference type="PANTHER" id="PTHR47410">
    <property type="entry name" value="TOLL-LIKE RECEPTOR 7-RELATED"/>
    <property type="match status" value="1"/>
</dbReference>
<dbReference type="PANTHER" id="PTHR47410:SF3">
    <property type="entry name" value="TOLL-LIKE RECEPTOR 9"/>
    <property type="match status" value="1"/>
</dbReference>
<dbReference type="Pfam" id="PF18837">
    <property type="entry name" value="LRR_12"/>
    <property type="match status" value="1"/>
</dbReference>
<dbReference type="Pfam" id="PF13516">
    <property type="entry name" value="LRR_6"/>
    <property type="match status" value="1"/>
</dbReference>
<dbReference type="Pfam" id="PF13855">
    <property type="entry name" value="LRR_8"/>
    <property type="match status" value="3"/>
</dbReference>
<dbReference type="PRINTS" id="PR00019">
    <property type="entry name" value="LEURICHRPT"/>
</dbReference>
<dbReference type="SMART" id="SM00364">
    <property type="entry name" value="LRR_BAC"/>
    <property type="match status" value="4"/>
</dbReference>
<dbReference type="SMART" id="SM00365">
    <property type="entry name" value="LRR_SD22"/>
    <property type="match status" value="6"/>
</dbReference>
<dbReference type="SMART" id="SM00369">
    <property type="entry name" value="LRR_TYP"/>
    <property type="match status" value="17"/>
</dbReference>
<dbReference type="SMART" id="SM00255">
    <property type="entry name" value="TIR"/>
    <property type="match status" value="1"/>
</dbReference>
<dbReference type="SUPFAM" id="SSF52058">
    <property type="entry name" value="L domain-like"/>
    <property type="match status" value="2"/>
</dbReference>
<dbReference type="SUPFAM" id="SSF52200">
    <property type="entry name" value="Toll/Interleukin receptor TIR domain"/>
    <property type="match status" value="1"/>
</dbReference>
<dbReference type="PROSITE" id="PS51450">
    <property type="entry name" value="LRR"/>
    <property type="match status" value="17"/>
</dbReference>
<dbReference type="PROSITE" id="PS50104">
    <property type="entry name" value="TIR"/>
    <property type="match status" value="1"/>
</dbReference>
<reference key="1">
    <citation type="submission" date="2004-12" db="EMBL/GenBank/DDBJ databases">
        <title>Ovis aries toll-like receptor 9 mRNA.</title>
        <authorList>
            <person name="Brownlie R."/>
            <person name="Mookherjee N."/>
            <person name="Mutwiri G."/>
            <person name="Babiuk L."/>
            <person name="Hecker R."/>
            <person name="Lipford G."/>
            <person name="Griebel P."/>
        </authorList>
    </citation>
    <scope>NUCLEOTIDE SEQUENCE [MRNA]</scope>
    <source>
        <tissue>Spleen</tissue>
    </source>
</reference>
<comment type="function">
    <text evidence="2 3">Key component of innate and adaptive immunity. TLRs (Toll-like receptors) control host immune response against pathogens through recognition of molecular patterns specific to microorganisms. TLR9 is a nucleotide-sensing TLR which is activated by unmethylated cytidine-phosphate-guanosine (CpG) dinucleotides. Acts via MYD88 and TRAF6, leading to NF-kappa-B activation, cytokine secretion and the inflammatory response. Upon CpG stimulation, induces B-cell proliferation, activation, survival and antibody production (By similarity).</text>
</comment>
<comment type="subunit">
    <text evidence="1 2 3">Monomer and homodimer. Exists as a monomer in the absence of unmethylated cytidine-phosphate-guanosine (CpG) ligand. Proteolytic processing of an insertion loop (Z-loop) is required for homodimerization upon binding to the unmethylated CpG ligand leading to its activation (By similarity). Interacts with MYD88 via their respective TIR domains (By similarity). Interacts with BTK (By similarity). Interacts (via transmembrane domain) with UNC93B1. Interacts with CD300LH; the interaction may promote full activation of TLR9-triggered innate responses. Interacts with CNPY3 and HSP90B1; this interaction is required for proper folding in the endoplasmic reticulum. Interacts with SMPDL3B (By similarity). Interacts with CD82; this interaction is essential for TLR9-dependent myddosome formation in response to CpG stimulation (By similarity).</text>
</comment>
<comment type="subcellular location">
    <subcellularLocation>
        <location evidence="2">Endoplasmic reticulum membrane</location>
        <topology evidence="2">Single-pass type I membrane protein</topology>
    </subcellularLocation>
    <subcellularLocation>
        <location evidence="2">Endosome</location>
    </subcellularLocation>
    <subcellularLocation>
        <location evidence="2">Lysosome</location>
    </subcellularLocation>
    <subcellularLocation>
        <location evidence="2">Cytoplasmic vesicle</location>
        <location evidence="2">Phagosome</location>
    </subcellularLocation>
    <text evidence="2">Relocalizes from endoplasmic reticulum to endosome and lysosome upon stimulation with agonist. Exit from the ER requires UNC93B1. Endolysosomal localization is required for proteolytic cleavage and subsequent activation. Intracellular localization of the active receptor may prevent from responding to self nucleic acid.</text>
</comment>
<comment type="PTM">
    <text evidence="2">Activated by proteolytic cleavage of the flexible loop between repeats LRR14 and LRR15 within the ectodomain. Cleavage requires UNC93B1. Proteolytically processed by first removing the majority of the ectodomain by either asparagine endopeptidase (AEP) or a cathepsin followed by a trimming event that is solely cathepsin mediated and required for optimal receptor signaling.</text>
</comment>
<comment type="PTM">
    <text evidence="3">Palmitoylated by ZDHHC3 in the Golgi regulates TLR9 trafficking from the Golgi to endosomes. Depalmitoylation by PPT1 controls the release of TLR9 from UNC93B1 in endosomes.</text>
</comment>
<comment type="similarity">
    <text evidence="6">Belongs to the Toll-like receptor family.</text>
</comment>
<keyword id="KW-0968">Cytoplasmic vesicle</keyword>
<keyword id="KW-1015">Disulfide bond</keyword>
<keyword id="KW-0256">Endoplasmic reticulum</keyword>
<keyword id="KW-0967">Endosome</keyword>
<keyword id="KW-0325">Glycoprotein</keyword>
<keyword id="KW-0391">Immunity</keyword>
<keyword id="KW-0395">Inflammatory response</keyword>
<keyword id="KW-0399">Innate immunity</keyword>
<keyword id="KW-0433">Leucine-rich repeat</keyword>
<keyword id="KW-0449">Lipoprotein</keyword>
<keyword id="KW-0458">Lysosome</keyword>
<keyword id="KW-0472">Membrane</keyword>
<keyword id="KW-0564">Palmitate</keyword>
<keyword id="KW-0675">Receptor</keyword>
<keyword id="KW-1185">Reference proteome</keyword>
<keyword id="KW-0677">Repeat</keyword>
<keyword id="KW-0732">Signal</keyword>
<keyword id="KW-0812">Transmembrane</keyword>
<keyword id="KW-1133">Transmembrane helix</keyword>
<evidence type="ECO:0000250" key="1">
    <source>
        <dbReference type="UniProtKB" id="Q2EEY0"/>
    </source>
</evidence>
<evidence type="ECO:0000250" key="2">
    <source>
        <dbReference type="UniProtKB" id="Q9EQU3"/>
    </source>
</evidence>
<evidence type="ECO:0000250" key="3">
    <source>
        <dbReference type="UniProtKB" id="Q9NR96"/>
    </source>
</evidence>
<evidence type="ECO:0000255" key="4"/>
<evidence type="ECO:0000255" key="5">
    <source>
        <dbReference type="PROSITE-ProRule" id="PRU00204"/>
    </source>
</evidence>
<evidence type="ECO:0000305" key="6"/>
<feature type="signal peptide" evidence="4">
    <location>
        <begin position="1"/>
        <end position="24"/>
    </location>
</feature>
<feature type="chain" id="PRO_0000227010" description="Toll-like receptor 9">
    <location>
        <begin position="25"/>
        <end position="1029"/>
    </location>
</feature>
<feature type="topological domain" description="Extracellular" evidence="4">
    <location>
        <begin position="25"/>
        <end position="815"/>
    </location>
</feature>
<feature type="transmembrane region" description="Helical" evidence="4">
    <location>
        <begin position="816"/>
        <end position="836"/>
    </location>
</feature>
<feature type="topological domain" description="Cytoplasmic" evidence="4">
    <location>
        <begin position="837"/>
        <end position="1029"/>
    </location>
</feature>
<feature type="repeat" description="LRR 1">
    <location>
        <begin position="61"/>
        <end position="84"/>
    </location>
</feature>
<feature type="repeat" description="LRR 2">
    <location>
        <begin position="86"/>
        <end position="109"/>
    </location>
</feature>
<feature type="repeat" description="LRR 3">
    <location>
        <begin position="121"/>
        <end position="146"/>
    </location>
</feature>
<feature type="repeat" description="LRR 4">
    <location>
        <begin position="149"/>
        <end position="165"/>
    </location>
</feature>
<feature type="repeat" description="LRR 5">
    <location>
        <begin position="166"/>
        <end position="189"/>
    </location>
</feature>
<feature type="repeat" description="LRR 6">
    <location>
        <begin position="197"/>
        <end position="220"/>
    </location>
</feature>
<feature type="repeat" description="LRR 7">
    <location>
        <begin position="222"/>
        <end position="241"/>
    </location>
</feature>
<feature type="repeat" description="LRR 8">
    <location>
        <begin position="242"/>
        <end position="267"/>
    </location>
</feature>
<feature type="repeat" description="LRR 9">
    <location>
        <begin position="282"/>
        <end position="305"/>
    </location>
</feature>
<feature type="repeat" description="LRR 10">
    <location>
        <begin position="307"/>
        <end position="331"/>
    </location>
</feature>
<feature type="repeat" description="LRR 11">
    <location>
        <begin position="332"/>
        <end position="355"/>
    </location>
</feature>
<feature type="repeat" description="LRR 12">
    <location>
        <begin position="362"/>
        <end position="385"/>
    </location>
</feature>
<feature type="repeat" description="LRR 13">
    <location>
        <begin position="389"/>
        <end position="412"/>
    </location>
</feature>
<feature type="repeat" description="LRR 14">
    <location>
        <begin position="414"/>
        <end position="439"/>
    </location>
</feature>
<feature type="repeat" description="LRR 15">
    <location>
        <begin position="469"/>
        <end position="492"/>
    </location>
</feature>
<feature type="repeat" description="LRR 16">
    <location>
        <begin position="494"/>
        <end position="517"/>
    </location>
</feature>
<feature type="repeat" description="LRR 17">
    <location>
        <begin position="518"/>
        <end position="541"/>
    </location>
</feature>
<feature type="repeat" description="LRR 18">
    <location>
        <begin position="543"/>
        <end position="570"/>
    </location>
</feature>
<feature type="repeat" description="LRR 19">
    <location>
        <begin position="572"/>
        <end position="596"/>
    </location>
</feature>
<feature type="repeat" description="LRR 20">
    <location>
        <begin position="598"/>
        <end position="620"/>
    </location>
</feature>
<feature type="repeat" description="LRR 21">
    <location>
        <begin position="625"/>
        <end position="648"/>
    </location>
</feature>
<feature type="repeat" description="LRR 22">
    <location>
        <begin position="650"/>
        <end position="673"/>
    </location>
</feature>
<feature type="repeat" description="LRR 23">
    <location>
        <begin position="674"/>
        <end position="697"/>
    </location>
</feature>
<feature type="repeat" description="LRR 24">
    <location>
        <begin position="699"/>
        <end position="721"/>
    </location>
</feature>
<feature type="repeat" description="LRR 25">
    <location>
        <begin position="722"/>
        <end position="745"/>
    </location>
</feature>
<feature type="repeat" description="LRR 26">
    <location>
        <begin position="747"/>
        <end position="770"/>
    </location>
</feature>
<feature type="domain" description="TIR" evidence="5">
    <location>
        <begin position="864"/>
        <end position="1009"/>
    </location>
</feature>
<feature type="binding site" evidence="1">
    <location>
        <begin position="46"/>
        <end position="50"/>
    </location>
    <ligand>
        <name>DNA</name>
        <dbReference type="ChEBI" id="CHEBI:16991"/>
        <note>CpG-containing DNA</note>
    </ligand>
</feature>
<feature type="binding site" evidence="1">
    <location>
        <begin position="71"/>
        <end position="76"/>
    </location>
    <ligand>
        <name>DNA</name>
        <dbReference type="ChEBI" id="CHEBI:16991"/>
        <note>CpG-containing DNA</note>
    </ligand>
</feature>
<feature type="binding site" evidence="1">
    <location>
        <begin position="94"/>
        <end position="108"/>
    </location>
    <ligand>
        <name>DNA</name>
        <dbReference type="ChEBI" id="CHEBI:16991"/>
        <note>CpG-containing DNA</note>
    </ligand>
</feature>
<feature type="binding site" evidence="1">
    <location>
        <position position="131"/>
    </location>
    <ligand>
        <name>DNA</name>
        <dbReference type="ChEBI" id="CHEBI:16991"/>
        <note>CpG-containing DNA</note>
    </ligand>
</feature>
<feature type="binding site" evidence="1">
    <location>
        <position position="151"/>
    </location>
    <ligand>
        <name>DNA</name>
        <dbReference type="ChEBI" id="CHEBI:16991"/>
        <note>CpG-containing DNA</note>
    </ligand>
</feature>
<feature type="binding site" evidence="1">
    <location>
        <begin position="178"/>
        <end position="180"/>
    </location>
    <ligand>
        <name>DNA</name>
        <dbReference type="ChEBI" id="CHEBI:16991"/>
        <note>CpG-containing DNA</note>
    </ligand>
</feature>
<feature type="binding site" evidence="1">
    <location>
        <position position="207"/>
    </location>
    <ligand>
        <name>DNA</name>
        <dbReference type="ChEBI" id="CHEBI:16991"/>
        <note>CpG-containing DNA</note>
    </ligand>
</feature>
<feature type="binding site" evidence="1">
    <location>
        <position position="261"/>
    </location>
    <ligand>
        <name>DNA</name>
        <dbReference type="ChEBI" id="CHEBI:16991"/>
        <note>CpG-containing DNA</note>
    </ligand>
</feature>
<feature type="lipid moiety-binding region" description="S-palmitoyl cysteine" evidence="3">
    <location>
        <position position="257"/>
    </location>
</feature>
<feature type="lipid moiety-binding region" description="S-palmitoyl cysteine" evidence="3">
    <location>
        <position position="264"/>
    </location>
</feature>
<feature type="glycosylation site" description="N-linked (GlcNAc...) asparagine" evidence="4">
    <location>
        <position position="63"/>
    </location>
</feature>
<feature type="glycosylation site" description="N-linked (GlcNAc...) asparagine" evidence="4">
    <location>
        <position position="128"/>
    </location>
</feature>
<feature type="glycosylation site" description="N-linked (GlcNAc...) asparagine" evidence="4">
    <location>
        <position position="199"/>
    </location>
</feature>
<feature type="glycosylation site" description="N-linked (GlcNAc...) asparagine" evidence="4">
    <location>
        <position position="209"/>
    </location>
</feature>
<feature type="glycosylation site" description="N-linked (GlcNAc...) asparagine" evidence="4">
    <location>
        <position position="241"/>
    </location>
</feature>
<feature type="glycosylation site" description="N-linked (GlcNAc...) asparagine" evidence="4">
    <location>
        <position position="331"/>
    </location>
</feature>
<feature type="glycosylation site" description="N-linked (GlcNAc...) asparagine" evidence="4">
    <location>
        <position position="339"/>
    </location>
</feature>
<feature type="glycosylation site" description="N-linked (GlcNAc...) asparagine" evidence="4">
    <location>
        <position position="380"/>
    </location>
</feature>
<feature type="glycosylation site" description="N-linked (GlcNAc...) asparagine" evidence="4">
    <location>
        <position position="472"/>
    </location>
</feature>
<feature type="glycosylation site" description="N-linked (GlcNAc...) asparagine" evidence="4">
    <location>
        <position position="511"/>
    </location>
</feature>
<feature type="glycosylation site" description="N-linked (GlcNAc...) asparagine" evidence="4">
    <location>
        <position position="565"/>
    </location>
</feature>
<feature type="glycosylation site" description="N-linked (GlcNAc...) asparagine" evidence="4">
    <location>
        <position position="667"/>
    </location>
</feature>
<feature type="glycosylation site" description="N-linked (GlcNAc...) asparagine" evidence="4">
    <location>
        <position position="692"/>
    </location>
</feature>
<feature type="glycosylation site" description="N-linked (GlcNAc...) asparagine" evidence="4">
    <location>
        <position position="729"/>
    </location>
</feature>
<feature type="disulfide bond" evidence="1">
    <location>
        <begin position="34"/>
        <end position="44"/>
    </location>
</feature>
<feature type="disulfide bond" evidence="1">
    <location>
        <begin position="97"/>
        <end position="109"/>
    </location>
</feature>
<feature type="disulfide bond" evidence="1">
    <location>
        <begin position="177"/>
        <end position="183"/>
    </location>
</feature>
<feature type="disulfide bond" evidence="1">
    <location>
        <begin position="254"/>
        <end position="267"/>
    </location>
</feature>
<feature type="disulfide bond" evidence="1">
    <location>
        <begin position="257"/>
        <end position="264"/>
    </location>
</feature>
<feature type="disulfide bond" evidence="1">
    <location>
        <begin position="469"/>
        <end position="498"/>
    </location>
</feature>
<feature type="disulfide bond" evidence="1">
    <location>
        <begin position="762"/>
        <end position="788"/>
    </location>
</feature>
<feature type="disulfide bond" evidence="1">
    <location>
        <begin position="764"/>
        <end position="807"/>
    </location>
</feature>
<name>TLR9_SHEEP</name>
<sequence>MGPYCAPHPLSLLVQAAALAAALAQGTLPAFLPCELQPRGKVNCNWLFLKSVPRFSAGAPRANVTSLSLISNRIHHLHDSDFVHLSNLRVLNLKWNCPPAGLSPMHFPCRMTIEPNTFLAVPTLEELNLSYNGITTVPALPSSLVSLSLSRTSILVLGPTHFTGLHALRFLYMDGNCYYKNPCQQAVEVAPGALLGLGNLTHLSLKYNNLTEVPRRLPPSLDTLLLSYNHIITLAPEDLANLTALRVLDVGGNCRRCDHARNPCRECPKNFPKLHPDTFSHLSRLEGLVLKDSSLYKLEKDWFRGLGRLQVLDLSENFLYDYITKTTIFRNLTQLRRLNLSFNYHKKVSFAHLQLAPSFGGLVSLEKLDMHGIFFRSLTNTTLRPLTQLPKLQSLSLQLNFINQAELSIFGAFPSLLFVDLSDNRISGAARPVAALGEVDSGVEVWRWPRGLAPGPLAAVSAKDFMPSCNLNFTLDLSRNNLVTIQQEMFTRLSRLQCLRLSHNSISQAVNGSQFVPLTRLRVLDLSYNKLDLYHGRSFTELPQLEALDLSYNSQPFSMQGVGHNLSFVAQLPSLRYLSLAHNGIHSRVSQKLSSASLRALDFSGNSLSQMWAEGDLYLCFFKGLRNLVQLDLSKNHLHTLLPRHLDNLPKSLRQLRLRDNNLAFFNWSSLTVLPQLEALDLAGNQLKALSNGSLPPGTRLQKLDVSSNSIGFVTPGFFVLANRLKELNLSANALKTVDPFWFGRLTETLKILDVSANPLHCACGAAFVDFLLEMQAAVPGLSRRVTCGSPGQLQGRSIFAQDLRLCLDETLSLDCFGFSLLMVALGLAVPMLHHLCGWDLWYCFHLCLAHLPRRRRQRGEDTLLYDAFVVFDKAQSAVADWVYNELRVQLEERRGRRALRLCLEERDWLPGKTLFENLWASVYSSRKTMFVLDHTDRVSGLLRASFLLAQQRLLEDRKDVVVLVILRPAAYRSRYVRLRQRLCRQSVLLWPHQPSGQGSFWANLGMALTRDNRHFYNRNFCRGPTTAE</sequence>
<accession>Q5I2M4</accession>
<organism>
    <name type="scientific">Ovis aries</name>
    <name type="common">Sheep</name>
    <dbReference type="NCBI Taxonomy" id="9940"/>
    <lineage>
        <taxon>Eukaryota</taxon>
        <taxon>Metazoa</taxon>
        <taxon>Chordata</taxon>
        <taxon>Craniata</taxon>
        <taxon>Vertebrata</taxon>
        <taxon>Euteleostomi</taxon>
        <taxon>Mammalia</taxon>
        <taxon>Eutheria</taxon>
        <taxon>Laurasiatheria</taxon>
        <taxon>Artiodactyla</taxon>
        <taxon>Ruminantia</taxon>
        <taxon>Pecora</taxon>
        <taxon>Bovidae</taxon>
        <taxon>Caprinae</taxon>
        <taxon>Ovis</taxon>
    </lineage>
</organism>
<gene>
    <name type="primary">TLR9</name>
</gene>
<proteinExistence type="evidence at transcript level"/>
<protein>
    <recommendedName>
        <fullName>Toll-like receptor 9</fullName>
    </recommendedName>
    <cdAntigenName>CD289</cdAntigenName>
</protein>